<feature type="chain" id="PRO_1000213188" description="Thiosulfate sulfurtransferase GlpE">
    <location>
        <begin position="1"/>
        <end position="108"/>
    </location>
</feature>
<feature type="domain" description="Rhodanese" evidence="1">
    <location>
        <begin position="17"/>
        <end position="105"/>
    </location>
</feature>
<feature type="active site" description="Cysteine persulfide intermediate" evidence="1">
    <location>
        <position position="65"/>
    </location>
</feature>
<sequence length="108" mass="12082">MDQFECINVADAHQKLQEKEAVLVDIRDPQSFAMGHAVQAFHLTNDTLGAFMRDNDFDTPVMVMCYHGNSSKGAAQYLLQQGYDVVYSIDGGFEAWQRQFPAEVAYGA</sequence>
<dbReference type="EC" id="2.8.1.1" evidence="1"/>
<dbReference type="EMBL" id="CP001396">
    <property type="protein sequence ID" value="ACR65646.1"/>
    <property type="molecule type" value="Genomic_DNA"/>
</dbReference>
<dbReference type="RefSeq" id="WP_000371928.1">
    <property type="nucleotide sequence ID" value="NC_012759.1"/>
</dbReference>
<dbReference type="SMR" id="C4ZVX6"/>
<dbReference type="GeneID" id="93778571"/>
<dbReference type="KEGG" id="ebw:BWG_3118"/>
<dbReference type="HOGENOM" id="CLU_089574_14_0_6"/>
<dbReference type="GO" id="GO:0005737">
    <property type="term" value="C:cytoplasm"/>
    <property type="evidence" value="ECO:0007669"/>
    <property type="project" value="UniProtKB-SubCell"/>
</dbReference>
<dbReference type="GO" id="GO:0004792">
    <property type="term" value="F:thiosulfate-cyanide sulfurtransferase activity"/>
    <property type="evidence" value="ECO:0007669"/>
    <property type="project" value="UniProtKB-UniRule"/>
</dbReference>
<dbReference type="GO" id="GO:0006071">
    <property type="term" value="P:glycerol metabolic process"/>
    <property type="evidence" value="ECO:0007669"/>
    <property type="project" value="UniProtKB-UniRule"/>
</dbReference>
<dbReference type="CDD" id="cd01444">
    <property type="entry name" value="GlpE_ST"/>
    <property type="match status" value="1"/>
</dbReference>
<dbReference type="FunFam" id="3.40.250.10:FF:000007">
    <property type="entry name" value="Thiosulfate sulfurtransferase GlpE"/>
    <property type="match status" value="1"/>
</dbReference>
<dbReference type="Gene3D" id="3.40.250.10">
    <property type="entry name" value="Rhodanese-like domain"/>
    <property type="match status" value="1"/>
</dbReference>
<dbReference type="HAMAP" id="MF_01009">
    <property type="entry name" value="Thiosulf_sulfurtr"/>
    <property type="match status" value="1"/>
</dbReference>
<dbReference type="InterPro" id="IPR050229">
    <property type="entry name" value="GlpE_sulfurtransferase"/>
</dbReference>
<dbReference type="InterPro" id="IPR001763">
    <property type="entry name" value="Rhodanese-like_dom"/>
</dbReference>
<dbReference type="InterPro" id="IPR036873">
    <property type="entry name" value="Rhodanese-like_dom_sf"/>
</dbReference>
<dbReference type="InterPro" id="IPR023695">
    <property type="entry name" value="Thiosulf_sulfurTrfase"/>
</dbReference>
<dbReference type="NCBIfam" id="NF001195">
    <property type="entry name" value="PRK00162.1"/>
    <property type="match status" value="1"/>
</dbReference>
<dbReference type="PANTHER" id="PTHR43031">
    <property type="entry name" value="FAD-DEPENDENT OXIDOREDUCTASE"/>
    <property type="match status" value="1"/>
</dbReference>
<dbReference type="PANTHER" id="PTHR43031:SF6">
    <property type="entry name" value="THIOSULFATE SULFURTRANSFERASE GLPE"/>
    <property type="match status" value="1"/>
</dbReference>
<dbReference type="Pfam" id="PF00581">
    <property type="entry name" value="Rhodanese"/>
    <property type="match status" value="1"/>
</dbReference>
<dbReference type="SMART" id="SM00450">
    <property type="entry name" value="RHOD"/>
    <property type="match status" value="1"/>
</dbReference>
<dbReference type="SUPFAM" id="SSF52821">
    <property type="entry name" value="Rhodanese/Cell cycle control phosphatase"/>
    <property type="match status" value="1"/>
</dbReference>
<dbReference type="PROSITE" id="PS50206">
    <property type="entry name" value="RHODANESE_3"/>
    <property type="match status" value="1"/>
</dbReference>
<evidence type="ECO:0000255" key="1">
    <source>
        <dbReference type="HAMAP-Rule" id="MF_01009"/>
    </source>
</evidence>
<gene>
    <name evidence="1" type="primary">glpE</name>
    <name type="ordered locus">BWG_3118</name>
</gene>
<protein>
    <recommendedName>
        <fullName evidence="1">Thiosulfate sulfurtransferase GlpE</fullName>
        <ecNumber evidence="1">2.8.1.1</ecNumber>
    </recommendedName>
</protein>
<proteinExistence type="inferred from homology"/>
<reference key="1">
    <citation type="journal article" date="2009" name="J. Bacteriol.">
        <title>Genomic sequencing reveals regulatory mutations and recombinational events in the widely used MC4100 lineage of Escherichia coli K-12.</title>
        <authorList>
            <person name="Ferenci T."/>
            <person name="Zhou Z."/>
            <person name="Betteridge T."/>
            <person name="Ren Y."/>
            <person name="Liu Y."/>
            <person name="Feng L."/>
            <person name="Reeves P.R."/>
            <person name="Wang L."/>
        </authorList>
    </citation>
    <scope>NUCLEOTIDE SEQUENCE [LARGE SCALE GENOMIC DNA]</scope>
    <source>
        <strain>K12 / MC4100 / BW2952</strain>
    </source>
</reference>
<organism>
    <name type="scientific">Escherichia coli (strain K12 / MC4100 / BW2952)</name>
    <dbReference type="NCBI Taxonomy" id="595496"/>
    <lineage>
        <taxon>Bacteria</taxon>
        <taxon>Pseudomonadati</taxon>
        <taxon>Pseudomonadota</taxon>
        <taxon>Gammaproteobacteria</taxon>
        <taxon>Enterobacterales</taxon>
        <taxon>Enterobacteriaceae</taxon>
        <taxon>Escherichia</taxon>
    </lineage>
</organism>
<keyword id="KW-0963">Cytoplasm</keyword>
<keyword id="KW-0808">Transferase</keyword>
<accession>C4ZVX6</accession>
<name>GLPE_ECOBW</name>
<comment type="function">
    <text evidence="1">Transferase that catalyzes the transfer of sulfur from thiosulfate to thiophilic acceptors such as cyanide or dithiols. May function in a CysM-independent thiosulfate assimilation pathway by catalyzing the conversion of thiosulfate to sulfite, which can then be used for L-cysteine biosynthesis.</text>
</comment>
<comment type="catalytic activity">
    <reaction evidence="1">
        <text>thiosulfate + hydrogen cyanide = thiocyanate + sulfite + 2 H(+)</text>
        <dbReference type="Rhea" id="RHEA:16881"/>
        <dbReference type="ChEBI" id="CHEBI:15378"/>
        <dbReference type="ChEBI" id="CHEBI:17359"/>
        <dbReference type="ChEBI" id="CHEBI:18022"/>
        <dbReference type="ChEBI" id="CHEBI:18407"/>
        <dbReference type="ChEBI" id="CHEBI:33542"/>
        <dbReference type="EC" id="2.8.1.1"/>
    </reaction>
</comment>
<comment type="catalytic activity">
    <reaction evidence="1">
        <text>thiosulfate + [thioredoxin]-dithiol = [thioredoxin]-disulfide + hydrogen sulfide + sulfite + 2 H(+)</text>
        <dbReference type="Rhea" id="RHEA:83859"/>
        <dbReference type="Rhea" id="RHEA-COMP:10698"/>
        <dbReference type="Rhea" id="RHEA-COMP:10700"/>
        <dbReference type="ChEBI" id="CHEBI:15378"/>
        <dbReference type="ChEBI" id="CHEBI:17359"/>
        <dbReference type="ChEBI" id="CHEBI:29919"/>
        <dbReference type="ChEBI" id="CHEBI:29950"/>
        <dbReference type="ChEBI" id="CHEBI:33542"/>
        <dbReference type="ChEBI" id="CHEBI:50058"/>
    </reaction>
</comment>
<comment type="subcellular location">
    <subcellularLocation>
        <location evidence="1">Cytoplasm</location>
    </subcellularLocation>
</comment>
<comment type="similarity">
    <text evidence="1">Belongs to the GlpE family.</text>
</comment>